<accession>P20833</accession>
<name>V11_BPT3</name>
<sequence length="46" mass="5893">MRTNFEKFTKRDSVVNEQGEQWQERRDRMKKRHKQQRGNSQKREWN</sequence>
<comment type="function">
    <text>The function of this early gene protein is unknown.</text>
</comment>
<evidence type="ECO:0000256" key="1">
    <source>
        <dbReference type="SAM" id="MobiDB-lite"/>
    </source>
</evidence>
<feature type="chain" id="PRO_0000106467" description="Gene 1.1 protein">
    <location>
        <begin position="1"/>
        <end position="46"/>
    </location>
</feature>
<feature type="region of interest" description="Disordered" evidence="1">
    <location>
        <begin position="1"/>
        <end position="46"/>
    </location>
</feature>
<feature type="compositionally biased region" description="Basic and acidic residues" evidence="1">
    <location>
        <begin position="1"/>
        <end position="14"/>
    </location>
</feature>
<gene>
    <name type="primary">1.1</name>
</gene>
<reference key="1">
    <citation type="journal article" date="1987" name="J. Mol. Biol.">
        <title>Sequence of a conditionally essential region of bacteriophage T3, including the primary origin of DNA replication.</title>
        <authorList>
            <person name="Schmitt M.P."/>
            <person name="Beck P.J."/>
            <person name="Kearney C.A."/>
            <person name="Spence J.L."/>
            <person name="Digiovanni D."/>
            <person name="Condreay J.P."/>
            <person name="Molineux I.J."/>
        </authorList>
    </citation>
    <scope>NUCLEOTIDE SEQUENCE [GENOMIC DNA]</scope>
    <source>
        <strain>Luria</strain>
    </source>
</reference>
<organismHost>
    <name type="scientific">Escherichia coli</name>
    <dbReference type="NCBI Taxonomy" id="562"/>
</organismHost>
<organism>
    <name type="scientific">Enterobacteria phage T3</name>
    <name type="common">Bacteriophage T3</name>
    <dbReference type="NCBI Taxonomy" id="10759"/>
    <lineage>
        <taxon>Viruses</taxon>
        <taxon>Duplodnaviria</taxon>
        <taxon>Heunggongvirae</taxon>
        <taxon>Uroviricota</taxon>
        <taxon>Caudoviricetes</taxon>
        <taxon>Autographiviridae</taxon>
        <taxon>Studiervirinae</taxon>
        <taxon>Teetrevirus</taxon>
        <taxon>Teetrevirus T3</taxon>
    </lineage>
</organism>
<keyword id="KW-0244">Early protein</keyword>
<dbReference type="EMBL" id="X17255">
    <property type="protein sequence ID" value="CAA35123.1"/>
    <property type="molecule type" value="Genomic_DNA"/>
</dbReference>
<dbReference type="EMBL" id="X05031">
    <property type="protein sequence ID" value="CAA28698.1"/>
    <property type="molecule type" value="Genomic_DNA"/>
</dbReference>
<dbReference type="PIR" id="S09537">
    <property type="entry name" value="S09537"/>
</dbReference>
<dbReference type="RefSeq" id="NP_523303.1">
    <property type="nucleotide sequence ID" value="NC_003298.1"/>
</dbReference>
<dbReference type="SMR" id="P20833"/>
<dbReference type="KEGG" id="vg:927439"/>
<dbReference type="OrthoDB" id="26210at10239"/>
<dbReference type="InterPro" id="IPR013232">
    <property type="entry name" value="Phage_T7_Gp1.1"/>
</dbReference>
<dbReference type="Pfam" id="PF08200">
    <property type="entry name" value="Phage_1_1"/>
    <property type="match status" value="1"/>
</dbReference>
<proteinExistence type="predicted"/>
<protein>
    <recommendedName>
        <fullName>Gene 1.1 protein</fullName>
    </recommendedName>
</protein>